<sequence>MADDAAVEDYPTEIEDNLNDFDSSLSSVQNMVQTLVSVSRSDRLLKLDPLEQAKLDLMSAYALNSMFWMYLVTQGVNPKDHPIKQELERIRTYMNKVKEITDRRKAAHIDKEAASRFVRNALWDADDKKRKDKTEHQQKGKHTKFTWS</sequence>
<reference key="1">
    <citation type="submission" date="2004-10" db="EMBL/GenBank/DDBJ databases">
        <authorList>
            <consortium name="NIH - Zebrafish Gene Collection (ZGC) project"/>
        </authorList>
    </citation>
    <scope>NUCLEOTIDE SEQUENCE [LARGE SCALE MRNA]</scope>
    <source>
        <tissue>Ovary</tissue>
    </source>
</reference>
<keyword id="KW-0175">Coiled coil</keyword>
<keyword id="KW-0963">Cytoplasm</keyword>
<keyword id="KW-0238">DNA-binding</keyword>
<keyword id="KW-0539">Nucleus</keyword>
<keyword id="KW-1185">Reference proteome</keyword>
<keyword id="KW-0694">RNA-binding</keyword>
<keyword id="KW-0698">rRNA processing</keyword>
<evidence type="ECO:0000250" key="1">
    <source>
        <dbReference type="UniProtKB" id="Q13901"/>
    </source>
</evidence>
<evidence type="ECO:0000255" key="2"/>
<evidence type="ECO:0000256" key="3">
    <source>
        <dbReference type="SAM" id="MobiDB-lite"/>
    </source>
</evidence>
<evidence type="ECO:0000305" key="4"/>
<feature type="chain" id="PRO_0000316304" description="Nuclear nucleic acid-binding protein C1D">
    <location>
        <begin position="1"/>
        <end position="148"/>
    </location>
</feature>
<feature type="region of interest" description="Disordered" evidence="3">
    <location>
        <begin position="128"/>
        <end position="148"/>
    </location>
</feature>
<feature type="coiled-coil region" evidence="2">
    <location>
        <begin position="83"/>
        <end position="107"/>
    </location>
</feature>
<feature type="compositionally biased region" description="Basic and acidic residues" evidence="3">
    <location>
        <begin position="128"/>
        <end position="138"/>
    </location>
</feature>
<feature type="compositionally biased region" description="Basic residues" evidence="3">
    <location>
        <begin position="139"/>
        <end position="148"/>
    </location>
</feature>
<comment type="function">
    <text evidence="1">Plays a role in the recruitment of the exosome to pre-rRNA to mediate the 3'-5' end processing of the 5.8S rRNA.</text>
</comment>
<comment type="subunit">
    <text evidence="1">Monomer and homodimer. Associates with the RNA exosome complex.</text>
</comment>
<comment type="subcellular location">
    <subcellularLocation>
        <location evidence="1">Nucleus</location>
    </subcellularLocation>
    <subcellularLocation>
        <location evidence="1">Cytoplasm</location>
    </subcellularLocation>
    <subcellularLocation>
        <location evidence="1">Nucleus</location>
        <location evidence="1">Nucleolus</location>
    </subcellularLocation>
</comment>
<comment type="similarity">
    <text evidence="4">Belongs to the C1D family.</text>
</comment>
<gene>
    <name type="primary">c1d</name>
    <name type="ORF">zgc:103509</name>
</gene>
<accession>Q5XJ97</accession>
<organism>
    <name type="scientific">Danio rerio</name>
    <name type="common">Zebrafish</name>
    <name type="synonym">Brachydanio rerio</name>
    <dbReference type="NCBI Taxonomy" id="7955"/>
    <lineage>
        <taxon>Eukaryota</taxon>
        <taxon>Metazoa</taxon>
        <taxon>Chordata</taxon>
        <taxon>Craniata</taxon>
        <taxon>Vertebrata</taxon>
        <taxon>Euteleostomi</taxon>
        <taxon>Actinopterygii</taxon>
        <taxon>Neopterygii</taxon>
        <taxon>Teleostei</taxon>
        <taxon>Ostariophysi</taxon>
        <taxon>Cypriniformes</taxon>
        <taxon>Danionidae</taxon>
        <taxon>Danioninae</taxon>
        <taxon>Danio</taxon>
    </lineage>
</organism>
<protein>
    <recommendedName>
        <fullName>Nuclear nucleic acid-binding protein C1D</fullName>
    </recommendedName>
</protein>
<proteinExistence type="evidence at transcript level"/>
<name>C1D_DANRE</name>
<dbReference type="EMBL" id="BC083407">
    <property type="protein sequence ID" value="AAH83407.1"/>
    <property type="molecule type" value="mRNA"/>
</dbReference>
<dbReference type="RefSeq" id="NP_001007060.1">
    <property type="nucleotide sequence ID" value="NM_001007059.1"/>
</dbReference>
<dbReference type="SMR" id="Q5XJ97"/>
<dbReference type="FunCoup" id="Q5XJ97">
    <property type="interactions" value="1663"/>
</dbReference>
<dbReference type="STRING" id="7955.ENSDARP00000020042"/>
<dbReference type="PaxDb" id="7955-ENSDARP00000020042"/>
<dbReference type="GeneID" id="474329"/>
<dbReference type="KEGG" id="dre:474329"/>
<dbReference type="AGR" id="ZFIN:ZDB-GENE-041024-8"/>
<dbReference type="CTD" id="10438"/>
<dbReference type="ZFIN" id="ZDB-GENE-041024-8">
    <property type="gene designation" value="c1d"/>
</dbReference>
<dbReference type="eggNOG" id="KOG4835">
    <property type="taxonomic scope" value="Eukaryota"/>
</dbReference>
<dbReference type="InParanoid" id="Q5XJ97"/>
<dbReference type="OrthoDB" id="1421013at2759"/>
<dbReference type="PhylomeDB" id="Q5XJ97"/>
<dbReference type="PRO" id="PR:Q5XJ97"/>
<dbReference type="Proteomes" id="UP000000437">
    <property type="component" value="Chromosome 13"/>
</dbReference>
<dbReference type="GO" id="GO:0005737">
    <property type="term" value="C:cytoplasm"/>
    <property type="evidence" value="ECO:0007669"/>
    <property type="project" value="UniProtKB-SubCell"/>
</dbReference>
<dbReference type="GO" id="GO:0000178">
    <property type="term" value="C:exosome (RNase complex)"/>
    <property type="evidence" value="ECO:0000318"/>
    <property type="project" value="GO_Central"/>
</dbReference>
<dbReference type="GO" id="GO:0005730">
    <property type="term" value="C:nucleolus"/>
    <property type="evidence" value="ECO:0000318"/>
    <property type="project" value="GO_Central"/>
</dbReference>
<dbReference type="GO" id="GO:0003677">
    <property type="term" value="F:DNA binding"/>
    <property type="evidence" value="ECO:0000318"/>
    <property type="project" value="GO_Central"/>
</dbReference>
<dbReference type="GO" id="GO:0003723">
    <property type="term" value="F:RNA binding"/>
    <property type="evidence" value="ECO:0000318"/>
    <property type="project" value="GO_Central"/>
</dbReference>
<dbReference type="GO" id="GO:0000460">
    <property type="term" value="P:maturation of 5.8S rRNA"/>
    <property type="evidence" value="ECO:0000318"/>
    <property type="project" value="GO_Central"/>
</dbReference>
<dbReference type="GO" id="GO:0010468">
    <property type="term" value="P:regulation of gene expression"/>
    <property type="evidence" value="ECO:0000318"/>
    <property type="project" value="GO_Central"/>
</dbReference>
<dbReference type="InterPro" id="IPR011082">
    <property type="entry name" value="Exosome-assoc_fac/DNA_repair"/>
</dbReference>
<dbReference type="InterPro" id="IPR007146">
    <property type="entry name" value="Sas10/Utp3/C1D"/>
</dbReference>
<dbReference type="PANTHER" id="PTHR15341:SF3">
    <property type="entry name" value="NUCLEAR NUCLEIC ACID-BINDING PROTEIN C1D"/>
    <property type="match status" value="1"/>
</dbReference>
<dbReference type="PANTHER" id="PTHR15341">
    <property type="entry name" value="SUN-COR STEROID HORMONE RECEPTOR CO-REPRESSOR"/>
    <property type="match status" value="1"/>
</dbReference>
<dbReference type="Pfam" id="PF04000">
    <property type="entry name" value="Sas10_Utp3"/>
    <property type="match status" value="1"/>
</dbReference>